<keyword id="KW-0067">ATP-binding</keyword>
<keyword id="KW-0173">Coenzyme A biosynthesis</keyword>
<keyword id="KW-0963">Cytoplasm</keyword>
<keyword id="KW-0418">Kinase</keyword>
<keyword id="KW-0479">Metal-binding</keyword>
<keyword id="KW-0547">Nucleotide-binding</keyword>
<keyword id="KW-0630">Potassium</keyword>
<keyword id="KW-1185">Reference proteome</keyword>
<keyword id="KW-0808">Transferase</keyword>
<gene>
    <name evidence="1" type="primary">coaX</name>
    <name type="ordered locus">Acry_0936</name>
</gene>
<sequence length="266" mass="28393">MKLVIDAGNTNIVFAVHDGSRWRGTWRIATDAQRTSDEYGVWLTVLLDRAGIAAGGIDGAVIGTVVPAALYHLRRLCRDWFSLEPLIARAELDWGFAIEMDNPAEIGADRLLNALAAHHGYGGPLIVIDFGTATTFDVVNGNGAYVGGVIAPGINLSVEALHQAAARLPRIGIGRPQLVIGKSTIPAMRSGIYWGYVGLVEGLIARIEADFGAPMKTIATGGLAPLIAEGTSRIEHTDPDLTLEGLRLLALRNPAPVLRPREAEHE</sequence>
<evidence type="ECO:0000255" key="1">
    <source>
        <dbReference type="HAMAP-Rule" id="MF_01274"/>
    </source>
</evidence>
<proteinExistence type="inferred from homology"/>
<feature type="chain" id="PRO_1000054354" description="Type III pantothenate kinase">
    <location>
        <begin position="1"/>
        <end position="266"/>
    </location>
</feature>
<feature type="active site" description="Proton acceptor" evidence="1">
    <location>
        <position position="109"/>
    </location>
</feature>
<feature type="binding site" evidence="1">
    <location>
        <begin position="6"/>
        <end position="13"/>
    </location>
    <ligand>
        <name>ATP</name>
        <dbReference type="ChEBI" id="CHEBI:30616"/>
    </ligand>
</feature>
<feature type="binding site" evidence="1">
    <location>
        <begin position="107"/>
        <end position="110"/>
    </location>
    <ligand>
        <name>substrate</name>
    </ligand>
</feature>
<feature type="binding site" evidence="1">
    <location>
        <position position="129"/>
    </location>
    <ligand>
        <name>K(+)</name>
        <dbReference type="ChEBI" id="CHEBI:29103"/>
    </ligand>
</feature>
<feature type="binding site" evidence="1">
    <location>
        <position position="132"/>
    </location>
    <ligand>
        <name>ATP</name>
        <dbReference type="ChEBI" id="CHEBI:30616"/>
    </ligand>
</feature>
<feature type="binding site" evidence="1">
    <location>
        <position position="184"/>
    </location>
    <ligand>
        <name>substrate</name>
    </ligand>
</feature>
<protein>
    <recommendedName>
        <fullName evidence="1">Type III pantothenate kinase</fullName>
        <ecNumber evidence="1">2.7.1.33</ecNumber>
    </recommendedName>
    <alternativeName>
        <fullName evidence="1">PanK-III</fullName>
    </alternativeName>
    <alternativeName>
        <fullName evidence="1">Pantothenic acid kinase</fullName>
    </alternativeName>
</protein>
<dbReference type="EC" id="2.7.1.33" evidence="1"/>
<dbReference type="EMBL" id="CP000697">
    <property type="protein sequence ID" value="ABQ30155.1"/>
    <property type="molecule type" value="Genomic_DNA"/>
</dbReference>
<dbReference type="RefSeq" id="WP_011941879.1">
    <property type="nucleotide sequence ID" value="NC_009484.1"/>
</dbReference>
<dbReference type="SMR" id="A5FX23"/>
<dbReference type="STRING" id="349163.Acry_0936"/>
<dbReference type="KEGG" id="acr:Acry_0936"/>
<dbReference type="eggNOG" id="COG1521">
    <property type="taxonomic scope" value="Bacteria"/>
</dbReference>
<dbReference type="HOGENOM" id="CLU_066627_1_0_5"/>
<dbReference type="UniPathway" id="UPA00241">
    <property type="reaction ID" value="UER00352"/>
</dbReference>
<dbReference type="Proteomes" id="UP000000245">
    <property type="component" value="Chromosome"/>
</dbReference>
<dbReference type="GO" id="GO:0005737">
    <property type="term" value="C:cytoplasm"/>
    <property type="evidence" value="ECO:0007669"/>
    <property type="project" value="UniProtKB-SubCell"/>
</dbReference>
<dbReference type="GO" id="GO:0005524">
    <property type="term" value="F:ATP binding"/>
    <property type="evidence" value="ECO:0007669"/>
    <property type="project" value="UniProtKB-UniRule"/>
</dbReference>
<dbReference type="GO" id="GO:0046872">
    <property type="term" value="F:metal ion binding"/>
    <property type="evidence" value="ECO:0007669"/>
    <property type="project" value="UniProtKB-KW"/>
</dbReference>
<dbReference type="GO" id="GO:0004594">
    <property type="term" value="F:pantothenate kinase activity"/>
    <property type="evidence" value="ECO:0007669"/>
    <property type="project" value="UniProtKB-UniRule"/>
</dbReference>
<dbReference type="GO" id="GO:0015937">
    <property type="term" value="P:coenzyme A biosynthetic process"/>
    <property type="evidence" value="ECO:0007669"/>
    <property type="project" value="UniProtKB-UniRule"/>
</dbReference>
<dbReference type="CDD" id="cd24015">
    <property type="entry name" value="ASKHA_NBD_PanK-III"/>
    <property type="match status" value="1"/>
</dbReference>
<dbReference type="Gene3D" id="3.30.420.40">
    <property type="match status" value="2"/>
</dbReference>
<dbReference type="HAMAP" id="MF_01274">
    <property type="entry name" value="Pantothen_kinase_3"/>
    <property type="match status" value="1"/>
</dbReference>
<dbReference type="InterPro" id="IPR043129">
    <property type="entry name" value="ATPase_NBD"/>
</dbReference>
<dbReference type="InterPro" id="IPR004619">
    <property type="entry name" value="Type_III_PanK"/>
</dbReference>
<dbReference type="NCBIfam" id="TIGR00671">
    <property type="entry name" value="baf"/>
    <property type="match status" value="1"/>
</dbReference>
<dbReference type="NCBIfam" id="NF009844">
    <property type="entry name" value="PRK13318.1-2"/>
    <property type="match status" value="1"/>
</dbReference>
<dbReference type="NCBIfam" id="NF009848">
    <property type="entry name" value="PRK13318.1-6"/>
    <property type="match status" value="1"/>
</dbReference>
<dbReference type="NCBIfam" id="NF009855">
    <property type="entry name" value="PRK13321.1"/>
    <property type="match status" value="1"/>
</dbReference>
<dbReference type="PANTHER" id="PTHR34265">
    <property type="entry name" value="TYPE III PANTOTHENATE KINASE"/>
    <property type="match status" value="1"/>
</dbReference>
<dbReference type="PANTHER" id="PTHR34265:SF1">
    <property type="entry name" value="TYPE III PANTOTHENATE KINASE"/>
    <property type="match status" value="1"/>
</dbReference>
<dbReference type="Pfam" id="PF03309">
    <property type="entry name" value="Pan_kinase"/>
    <property type="match status" value="1"/>
</dbReference>
<dbReference type="SUPFAM" id="SSF53067">
    <property type="entry name" value="Actin-like ATPase domain"/>
    <property type="match status" value="2"/>
</dbReference>
<name>COAX_ACICJ</name>
<accession>A5FX23</accession>
<organism>
    <name type="scientific">Acidiphilium cryptum (strain JF-5)</name>
    <dbReference type="NCBI Taxonomy" id="349163"/>
    <lineage>
        <taxon>Bacteria</taxon>
        <taxon>Pseudomonadati</taxon>
        <taxon>Pseudomonadota</taxon>
        <taxon>Alphaproteobacteria</taxon>
        <taxon>Acetobacterales</taxon>
        <taxon>Acidocellaceae</taxon>
        <taxon>Acidiphilium</taxon>
    </lineage>
</organism>
<reference key="1">
    <citation type="submission" date="2007-05" db="EMBL/GenBank/DDBJ databases">
        <title>Complete sequence of chromosome of Acidiphilium cryptum JF-5.</title>
        <authorList>
            <consortium name="US DOE Joint Genome Institute"/>
            <person name="Copeland A."/>
            <person name="Lucas S."/>
            <person name="Lapidus A."/>
            <person name="Barry K."/>
            <person name="Detter J.C."/>
            <person name="Glavina del Rio T."/>
            <person name="Hammon N."/>
            <person name="Israni S."/>
            <person name="Dalin E."/>
            <person name="Tice H."/>
            <person name="Pitluck S."/>
            <person name="Sims D."/>
            <person name="Brettin T."/>
            <person name="Bruce D."/>
            <person name="Han C."/>
            <person name="Schmutz J."/>
            <person name="Larimer F."/>
            <person name="Land M."/>
            <person name="Hauser L."/>
            <person name="Kyrpides N."/>
            <person name="Kim E."/>
            <person name="Magnuson T."/>
            <person name="Richardson P."/>
        </authorList>
    </citation>
    <scope>NUCLEOTIDE SEQUENCE [LARGE SCALE GENOMIC DNA]</scope>
    <source>
        <strain>JF-5</strain>
    </source>
</reference>
<comment type="function">
    <text evidence="1">Catalyzes the phosphorylation of pantothenate (Pan), the first step in CoA biosynthesis.</text>
</comment>
<comment type="catalytic activity">
    <reaction evidence="1">
        <text>(R)-pantothenate + ATP = (R)-4'-phosphopantothenate + ADP + H(+)</text>
        <dbReference type="Rhea" id="RHEA:16373"/>
        <dbReference type="ChEBI" id="CHEBI:10986"/>
        <dbReference type="ChEBI" id="CHEBI:15378"/>
        <dbReference type="ChEBI" id="CHEBI:29032"/>
        <dbReference type="ChEBI" id="CHEBI:30616"/>
        <dbReference type="ChEBI" id="CHEBI:456216"/>
        <dbReference type="EC" id="2.7.1.33"/>
    </reaction>
</comment>
<comment type="cofactor">
    <cofactor evidence="1">
        <name>NH4(+)</name>
        <dbReference type="ChEBI" id="CHEBI:28938"/>
    </cofactor>
    <cofactor evidence="1">
        <name>K(+)</name>
        <dbReference type="ChEBI" id="CHEBI:29103"/>
    </cofactor>
    <text evidence="1">A monovalent cation. Ammonium or potassium.</text>
</comment>
<comment type="pathway">
    <text evidence="1">Cofactor biosynthesis; coenzyme A biosynthesis; CoA from (R)-pantothenate: step 1/5.</text>
</comment>
<comment type="subunit">
    <text evidence="1">Homodimer.</text>
</comment>
<comment type="subcellular location">
    <subcellularLocation>
        <location evidence="1">Cytoplasm</location>
    </subcellularLocation>
</comment>
<comment type="similarity">
    <text evidence="1">Belongs to the type III pantothenate kinase family.</text>
</comment>